<comment type="function">
    <text evidence="2">Antioxidant protein with alkyl hydroperoxidase activity. Required for the reduction of the AhpC active site cysteine residues and for the regeneration of the AhpC enzyme activity.</text>
</comment>
<comment type="catalytic activity">
    <reaction evidence="2">
        <text>N(6)-[(R)-dihydrolipoyl]-L-lysyl-[lipoyl-carrier protein] + a hydroperoxide = N(6)-[(R)-lipoyl]-L-lysyl-[lipoyl-carrier protein] + an alcohol + H2O</text>
        <dbReference type="Rhea" id="RHEA:62636"/>
        <dbReference type="Rhea" id="RHEA-COMP:10502"/>
        <dbReference type="Rhea" id="RHEA-COMP:16355"/>
        <dbReference type="ChEBI" id="CHEBI:15377"/>
        <dbReference type="ChEBI" id="CHEBI:30879"/>
        <dbReference type="ChEBI" id="CHEBI:35924"/>
        <dbReference type="ChEBI" id="CHEBI:83099"/>
        <dbReference type="ChEBI" id="CHEBI:83100"/>
        <dbReference type="EC" id="1.11.1.28"/>
    </reaction>
</comment>
<comment type="similarity">
    <text evidence="2">Belongs to the AhpD family.</text>
</comment>
<dbReference type="EC" id="1.11.1.28" evidence="2"/>
<dbReference type="EMBL" id="CP001359">
    <property type="protein sequence ID" value="ACL63695.1"/>
    <property type="molecule type" value="Genomic_DNA"/>
</dbReference>
<dbReference type="RefSeq" id="WP_012631750.1">
    <property type="nucleotide sequence ID" value="NC_011891.1"/>
</dbReference>
<dbReference type="SMR" id="B8J9Z2"/>
<dbReference type="KEGG" id="acp:A2cp1_0336"/>
<dbReference type="HOGENOM" id="CLU_105328_0_0_7"/>
<dbReference type="Proteomes" id="UP000007089">
    <property type="component" value="Chromosome"/>
</dbReference>
<dbReference type="GO" id="GO:0008785">
    <property type="term" value="F:alkyl hydroperoxide reductase activity"/>
    <property type="evidence" value="ECO:0007669"/>
    <property type="project" value="UniProtKB-UniRule"/>
</dbReference>
<dbReference type="GO" id="GO:0015036">
    <property type="term" value="F:disulfide oxidoreductase activity"/>
    <property type="evidence" value="ECO:0007669"/>
    <property type="project" value="TreeGrafter"/>
</dbReference>
<dbReference type="GO" id="GO:0032843">
    <property type="term" value="F:hydroperoxide reductase activity"/>
    <property type="evidence" value="ECO:0007669"/>
    <property type="project" value="InterPro"/>
</dbReference>
<dbReference type="GO" id="GO:0051920">
    <property type="term" value="F:peroxiredoxin activity"/>
    <property type="evidence" value="ECO:0007669"/>
    <property type="project" value="InterPro"/>
</dbReference>
<dbReference type="GO" id="GO:0045454">
    <property type="term" value="P:cell redox homeostasis"/>
    <property type="evidence" value="ECO:0007669"/>
    <property type="project" value="TreeGrafter"/>
</dbReference>
<dbReference type="GO" id="GO:0006979">
    <property type="term" value="P:response to oxidative stress"/>
    <property type="evidence" value="ECO:0007669"/>
    <property type="project" value="InterPro"/>
</dbReference>
<dbReference type="Gene3D" id="1.20.1290.10">
    <property type="entry name" value="AhpD-like"/>
    <property type="match status" value="1"/>
</dbReference>
<dbReference type="HAMAP" id="MF_01676">
    <property type="entry name" value="AhpD"/>
    <property type="match status" value="1"/>
</dbReference>
<dbReference type="InterPro" id="IPR004674">
    <property type="entry name" value="AhpD"/>
</dbReference>
<dbReference type="InterPro" id="IPR029032">
    <property type="entry name" value="AhpD-like"/>
</dbReference>
<dbReference type="InterPro" id="IPR004675">
    <property type="entry name" value="AhpD_core"/>
</dbReference>
<dbReference type="InterPro" id="IPR003779">
    <property type="entry name" value="CMD-like"/>
</dbReference>
<dbReference type="NCBIfam" id="TIGR00778">
    <property type="entry name" value="ahpD_dom"/>
    <property type="match status" value="1"/>
</dbReference>
<dbReference type="PANTHER" id="PTHR33930">
    <property type="entry name" value="ALKYL HYDROPEROXIDE REDUCTASE AHPD"/>
    <property type="match status" value="1"/>
</dbReference>
<dbReference type="PANTHER" id="PTHR33930:SF7">
    <property type="entry name" value="ALKYL HYDROPEROXIDE REDUCTASE AHPD"/>
    <property type="match status" value="1"/>
</dbReference>
<dbReference type="Pfam" id="PF02627">
    <property type="entry name" value="CMD"/>
    <property type="match status" value="1"/>
</dbReference>
<dbReference type="SUPFAM" id="SSF69118">
    <property type="entry name" value="AhpD-like"/>
    <property type="match status" value="1"/>
</dbReference>
<proteinExistence type="inferred from homology"/>
<protein>
    <recommendedName>
        <fullName evidence="2">Alkyl hydroperoxide reductase AhpD</fullName>
        <ecNumber evidence="2">1.11.1.28</ecNumber>
    </recommendedName>
    <alternativeName>
        <fullName evidence="2">Alkylhydroperoxidase AhpD</fullName>
    </alternativeName>
</protein>
<feature type="chain" id="PRO_1000187332" description="Alkyl hydroperoxide reductase AhpD">
    <location>
        <begin position="1"/>
        <end position="186"/>
    </location>
</feature>
<feature type="active site" description="Proton donor" evidence="2">
    <location>
        <position position="132"/>
    </location>
</feature>
<feature type="active site" description="Cysteine sulfenic acid (-SOH) intermediate" evidence="2">
    <location>
        <position position="135"/>
    </location>
</feature>
<feature type="disulfide bond" evidence="1">
    <location>
        <begin position="132"/>
        <end position="135"/>
    </location>
</feature>
<feature type="disulfide bond" description="Interchain (with AhpC); in linked form" evidence="2">
    <location>
        <position position="135"/>
    </location>
</feature>
<organism>
    <name type="scientific">Anaeromyxobacter dehalogenans (strain 2CP-1 / ATCC BAA-258)</name>
    <dbReference type="NCBI Taxonomy" id="455488"/>
    <lineage>
        <taxon>Bacteria</taxon>
        <taxon>Pseudomonadati</taxon>
        <taxon>Myxococcota</taxon>
        <taxon>Myxococcia</taxon>
        <taxon>Myxococcales</taxon>
        <taxon>Cystobacterineae</taxon>
        <taxon>Anaeromyxobacteraceae</taxon>
        <taxon>Anaeromyxobacter</taxon>
    </lineage>
</organism>
<name>AHPD_ANAD2</name>
<sequence length="186" mass="19376">MAALDAIREALPEPARDIKLNLQAVLQPGTLTPAQRWGVAVATAAAARNERLLAAALADARAEVEPAVIEDALAAAAVMAMNNVYYRFRHMVGKASYAEKPARLRMNRLVKPAASKVDFELFALAVSAVNGCETCVRSHEQVVVAGGLSEDQVHEAVRIAAVLHAAAVSLELAGYAAVPSAAAAAG</sequence>
<reference key="1">
    <citation type="submission" date="2009-01" db="EMBL/GenBank/DDBJ databases">
        <title>Complete sequence of Anaeromyxobacter dehalogenans 2CP-1.</title>
        <authorList>
            <person name="Lucas S."/>
            <person name="Copeland A."/>
            <person name="Lapidus A."/>
            <person name="Glavina del Rio T."/>
            <person name="Dalin E."/>
            <person name="Tice H."/>
            <person name="Bruce D."/>
            <person name="Goodwin L."/>
            <person name="Pitluck S."/>
            <person name="Saunders E."/>
            <person name="Brettin T."/>
            <person name="Detter J.C."/>
            <person name="Han C."/>
            <person name="Larimer F."/>
            <person name="Land M."/>
            <person name="Hauser L."/>
            <person name="Kyrpides N."/>
            <person name="Ovchinnikova G."/>
            <person name="Beliaev A.S."/>
            <person name="Richardson P."/>
        </authorList>
    </citation>
    <scope>NUCLEOTIDE SEQUENCE [LARGE SCALE GENOMIC DNA]</scope>
    <source>
        <strain>2CP-1 / ATCC BAA-258</strain>
    </source>
</reference>
<evidence type="ECO:0000250" key="1"/>
<evidence type="ECO:0000255" key="2">
    <source>
        <dbReference type="HAMAP-Rule" id="MF_01676"/>
    </source>
</evidence>
<gene>
    <name evidence="2" type="primary">ahpD</name>
    <name type="ordered locus">A2cp1_0336</name>
</gene>
<keyword id="KW-0049">Antioxidant</keyword>
<keyword id="KW-1015">Disulfide bond</keyword>
<keyword id="KW-0560">Oxidoreductase</keyword>
<keyword id="KW-0575">Peroxidase</keyword>
<keyword id="KW-0676">Redox-active center</keyword>
<accession>B8J9Z2</accession>